<gene>
    <name evidence="1" type="primary">coaA</name>
    <name type="ordered locus">SBO_3994</name>
</gene>
<evidence type="ECO:0000255" key="1">
    <source>
        <dbReference type="HAMAP-Rule" id="MF_00215"/>
    </source>
</evidence>
<dbReference type="EC" id="2.7.1.33" evidence="1"/>
<dbReference type="EMBL" id="CP000036">
    <property type="protein sequence ID" value="ABB68439.1"/>
    <property type="molecule type" value="Genomic_DNA"/>
</dbReference>
<dbReference type="RefSeq" id="WP_000023091.1">
    <property type="nucleotide sequence ID" value="NC_007613.1"/>
</dbReference>
<dbReference type="SMR" id="Q31U19"/>
<dbReference type="KEGG" id="sbo:SBO_3994"/>
<dbReference type="HOGENOM" id="CLU_053818_1_1_6"/>
<dbReference type="UniPathway" id="UPA00241">
    <property type="reaction ID" value="UER00352"/>
</dbReference>
<dbReference type="Proteomes" id="UP000007067">
    <property type="component" value="Chromosome"/>
</dbReference>
<dbReference type="GO" id="GO:0005737">
    <property type="term" value="C:cytoplasm"/>
    <property type="evidence" value="ECO:0007669"/>
    <property type="project" value="UniProtKB-SubCell"/>
</dbReference>
<dbReference type="GO" id="GO:0005524">
    <property type="term" value="F:ATP binding"/>
    <property type="evidence" value="ECO:0007669"/>
    <property type="project" value="UniProtKB-UniRule"/>
</dbReference>
<dbReference type="GO" id="GO:0004594">
    <property type="term" value="F:pantothenate kinase activity"/>
    <property type="evidence" value="ECO:0007669"/>
    <property type="project" value="UniProtKB-UniRule"/>
</dbReference>
<dbReference type="GO" id="GO:0015937">
    <property type="term" value="P:coenzyme A biosynthetic process"/>
    <property type="evidence" value="ECO:0007669"/>
    <property type="project" value="UniProtKB-UniRule"/>
</dbReference>
<dbReference type="CDD" id="cd02025">
    <property type="entry name" value="PanK"/>
    <property type="match status" value="1"/>
</dbReference>
<dbReference type="FunFam" id="3.40.50.300:FF:000242">
    <property type="entry name" value="Pantothenate kinase"/>
    <property type="match status" value="1"/>
</dbReference>
<dbReference type="Gene3D" id="3.40.50.300">
    <property type="entry name" value="P-loop containing nucleotide triphosphate hydrolases"/>
    <property type="match status" value="1"/>
</dbReference>
<dbReference type="HAMAP" id="MF_00215">
    <property type="entry name" value="Pantothen_kinase_1"/>
    <property type="match status" value="1"/>
</dbReference>
<dbReference type="InterPro" id="IPR027417">
    <property type="entry name" value="P-loop_NTPase"/>
</dbReference>
<dbReference type="InterPro" id="IPR004566">
    <property type="entry name" value="PanK"/>
</dbReference>
<dbReference type="InterPro" id="IPR006083">
    <property type="entry name" value="PRK/URK"/>
</dbReference>
<dbReference type="NCBIfam" id="TIGR00554">
    <property type="entry name" value="panK_bact"/>
    <property type="match status" value="1"/>
</dbReference>
<dbReference type="PANTHER" id="PTHR10285">
    <property type="entry name" value="URIDINE KINASE"/>
    <property type="match status" value="1"/>
</dbReference>
<dbReference type="Pfam" id="PF00485">
    <property type="entry name" value="PRK"/>
    <property type="match status" value="1"/>
</dbReference>
<dbReference type="PIRSF" id="PIRSF000545">
    <property type="entry name" value="Pantothenate_kin"/>
    <property type="match status" value="1"/>
</dbReference>
<dbReference type="SUPFAM" id="SSF52540">
    <property type="entry name" value="P-loop containing nucleoside triphosphate hydrolases"/>
    <property type="match status" value="1"/>
</dbReference>
<sequence>MSIKEQTLMTPYLQFDRNQWAAQRDSVPMTLSEDEIARLKGINEDLSLEEVAEIYLPLSRLLNFYISSNLRRQAVLEQFLGTNGQRIPYIISIAGSVAVGKSTTARVLQALLSRWPEHRRVELITTDGFLHPNQVLKERGLMKKKGFPESYDMHRLVKFVSDLKSGVPNVTAPVYSHLIYDVIPDGDKTVVQPDILILEGLNVLQSGMDYPHDPHHVFVSDFVDFSIYVDAPEDLLQTWYINRFLKFREGAFTDPDSYFHNYAKLTKEEAIKTAMTLWKEINWLNLKQNILPTRERASLILTKSANHAVEEVRLRK</sequence>
<accession>Q31U19</accession>
<feature type="chain" id="PRO_1000043257" description="Pantothenate kinase">
    <location>
        <begin position="1"/>
        <end position="316"/>
    </location>
</feature>
<feature type="binding site" evidence="1">
    <location>
        <begin position="95"/>
        <end position="102"/>
    </location>
    <ligand>
        <name>ATP</name>
        <dbReference type="ChEBI" id="CHEBI:30616"/>
    </ligand>
</feature>
<reference key="1">
    <citation type="journal article" date="2005" name="Nucleic Acids Res.">
        <title>Genome dynamics and diversity of Shigella species, the etiologic agents of bacillary dysentery.</title>
        <authorList>
            <person name="Yang F."/>
            <person name="Yang J."/>
            <person name="Zhang X."/>
            <person name="Chen L."/>
            <person name="Jiang Y."/>
            <person name="Yan Y."/>
            <person name="Tang X."/>
            <person name="Wang J."/>
            <person name="Xiong Z."/>
            <person name="Dong J."/>
            <person name="Xue Y."/>
            <person name="Zhu Y."/>
            <person name="Xu X."/>
            <person name="Sun L."/>
            <person name="Chen S."/>
            <person name="Nie H."/>
            <person name="Peng J."/>
            <person name="Xu J."/>
            <person name="Wang Y."/>
            <person name="Yuan Z."/>
            <person name="Wen Y."/>
            <person name="Yao Z."/>
            <person name="Shen Y."/>
            <person name="Qiang B."/>
            <person name="Hou Y."/>
            <person name="Yu J."/>
            <person name="Jin Q."/>
        </authorList>
    </citation>
    <scope>NUCLEOTIDE SEQUENCE [LARGE SCALE GENOMIC DNA]</scope>
    <source>
        <strain>Sb227</strain>
    </source>
</reference>
<protein>
    <recommendedName>
        <fullName evidence="1">Pantothenate kinase</fullName>
        <ecNumber evidence="1">2.7.1.33</ecNumber>
    </recommendedName>
    <alternativeName>
        <fullName evidence="1">Pantothenic acid kinase</fullName>
    </alternativeName>
</protein>
<name>COAA_SHIBS</name>
<proteinExistence type="inferred from homology"/>
<comment type="catalytic activity">
    <reaction evidence="1">
        <text>(R)-pantothenate + ATP = (R)-4'-phosphopantothenate + ADP + H(+)</text>
        <dbReference type="Rhea" id="RHEA:16373"/>
        <dbReference type="ChEBI" id="CHEBI:10986"/>
        <dbReference type="ChEBI" id="CHEBI:15378"/>
        <dbReference type="ChEBI" id="CHEBI:29032"/>
        <dbReference type="ChEBI" id="CHEBI:30616"/>
        <dbReference type="ChEBI" id="CHEBI:456216"/>
        <dbReference type="EC" id="2.7.1.33"/>
    </reaction>
</comment>
<comment type="pathway">
    <text evidence="1">Cofactor biosynthesis; coenzyme A biosynthesis; CoA from (R)-pantothenate: step 1/5.</text>
</comment>
<comment type="subcellular location">
    <subcellularLocation>
        <location evidence="1">Cytoplasm</location>
    </subcellularLocation>
</comment>
<comment type="similarity">
    <text evidence="1">Belongs to the prokaryotic pantothenate kinase family.</text>
</comment>
<keyword id="KW-0067">ATP-binding</keyword>
<keyword id="KW-0173">Coenzyme A biosynthesis</keyword>
<keyword id="KW-0963">Cytoplasm</keyword>
<keyword id="KW-0418">Kinase</keyword>
<keyword id="KW-0547">Nucleotide-binding</keyword>
<keyword id="KW-0808">Transferase</keyword>
<organism>
    <name type="scientific">Shigella boydii serotype 4 (strain Sb227)</name>
    <dbReference type="NCBI Taxonomy" id="300268"/>
    <lineage>
        <taxon>Bacteria</taxon>
        <taxon>Pseudomonadati</taxon>
        <taxon>Pseudomonadota</taxon>
        <taxon>Gammaproteobacteria</taxon>
        <taxon>Enterobacterales</taxon>
        <taxon>Enterobacteriaceae</taxon>
        <taxon>Shigella</taxon>
    </lineage>
</organism>